<reference key="1">
    <citation type="journal article" date="2002" name="Proc. Natl. Acad. Sci. U.S.A.">
        <title>Extensive mosaic structure revealed by the complete genome sequence of uropathogenic Escherichia coli.</title>
        <authorList>
            <person name="Welch R.A."/>
            <person name="Burland V."/>
            <person name="Plunkett G. III"/>
            <person name="Redford P."/>
            <person name="Roesch P."/>
            <person name="Rasko D."/>
            <person name="Buckles E.L."/>
            <person name="Liou S.-R."/>
            <person name="Boutin A."/>
            <person name="Hackett J."/>
            <person name="Stroud D."/>
            <person name="Mayhew G.F."/>
            <person name="Rose D.J."/>
            <person name="Zhou S."/>
            <person name="Schwartz D.C."/>
            <person name="Perna N.T."/>
            <person name="Mobley H.L.T."/>
            <person name="Donnenberg M.S."/>
            <person name="Blattner F.R."/>
        </authorList>
    </citation>
    <scope>NUCLEOTIDE SEQUENCE [LARGE SCALE GENOMIC DNA]</scope>
    <source>
        <strain>CFT073 / ATCC 700928 / UPEC</strain>
    </source>
</reference>
<comment type="similarity">
    <text evidence="2">Belongs to the acetyltransferase family.</text>
</comment>
<feature type="chain" id="PRO_0000074611" description="Uncharacterized N-acetyltransferase YhbS">
    <location>
        <begin position="1"/>
        <end position="167"/>
    </location>
</feature>
<feature type="domain" description="N-acetyltransferase" evidence="1">
    <location>
        <begin position="1"/>
        <end position="148"/>
    </location>
</feature>
<dbReference type="EC" id="2.3.1.-"/>
<dbReference type="EMBL" id="AE014075">
    <property type="protein sequence ID" value="AAN82350.1"/>
    <property type="molecule type" value="Genomic_DNA"/>
</dbReference>
<dbReference type="RefSeq" id="WP_000908554.1">
    <property type="nucleotide sequence ID" value="NZ_CP051263.1"/>
</dbReference>
<dbReference type="SMR" id="P63418"/>
<dbReference type="STRING" id="199310.c3909"/>
<dbReference type="KEGG" id="ecc:c3909"/>
<dbReference type="eggNOG" id="COG3153">
    <property type="taxonomic scope" value="Bacteria"/>
</dbReference>
<dbReference type="HOGENOM" id="CLU_081840_2_1_6"/>
<dbReference type="BioCyc" id="ECOL199310:C3909-MONOMER"/>
<dbReference type="Proteomes" id="UP000001410">
    <property type="component" value="Chromosome"/>
</dbReference>
<dbReference type="GO" id="GO:0016747">
    <property type="term" value="F:acyltransferase activity, transferring groups other than amino-acyl groups"/>
    <property type="evidence" value="ECO:0007669"/>
    <property type="project" value="InterPro"/>
</dbReference>
<dbReference type="CDD" id="cd04301">
    <property type="entry name" value="NAT_SF"/>
    <property type="match status" value="1"/>
</dbReference>
<dbReference type="FunFam" id="3.40.630.30:FF:000008">
    <property type="entry name" value="Acetyltransferase, GNAT family"/>
    <property type="match status" value="1"/>
</dbReference>
<dbReference type="Gene3D" id="3.40.630.30">
    <property type="match status" value="1"/>
</dbReference>
<dbReference type="InterPro" id="IPR016181">
    <property type="entry name" value="Acyl_CoA_acyltransferase"/>
</dbReference>
<dbReference type="InterPro" id="IPR000182">
    <property type="entry name" value="GNAT_dom"/>
</dbReference>
<dbReference type="Pfam" id="PF00583">
    <property type="entry name" value="Acetyltransf_1"/>
    <property type="match status" value="1"/>
</dbReference>
<dbReference type="SUPFAM" id="SSF55729">
    <property type="entry name" value="Acyl-CoA N-acyltransferases (Nat)"/>
    <property type="match status" value="1"/>
</dbReference>
<dbReference type="PROSITE" id="PS51186">
    <property type="entry name" value="GNAT"/>
    <property type="match status" value="1"/>
</dbReference>
<gene>
    <name type="primary">yhbS</name>
    <name type="ordered locus">c3909</name>
</gene>
<sequence length="167" mass="18534">MLIRVEIPIDAPGIDALLRRSFESDAEAKLVHDLREDGFLTLGLVATDDEGQVIGYVAFSPVDVQGEDLQWVGMAPLAVDEKYRGQGLARQLVYEGLDSLNEFGYAAVVTLGDPALYSRFGFELAAHHDLRCRWPGTESAFQVHRLADDALNGVTGLVEYHEHFNRF</sequence>
<protein>
    <recommendedName>
        <fullName>Uncharacterized N-acetyltransferase YhbS</fullName>
        <ecNumber>2.3.1.-</ecNumber>
    </recommendedName>
</protein>
<proteinExistence type="inferred from homology"/>
<keyword id="KW-0012">Acyltransferase</keyword>
<keyword id="KW-1185">Reference proteome</keyword>
<keyword id="KW-0808">Transferase</keyword>
<name>YHBS_ECOL6</name>
<evidence type="ECO:0000255" key="1">
    <source>
        <dbReference type="PROSITE-ProRule" id="PRU00532"/>
    </source>
</evidence>
<evidence type="ECO:0000305" key="2"/>
<organism>
    <name type="scientific">Escherichia coli O6:H1 (strain CFT073 / ATCC 700928 / UPEC)</name>
    <dbReference type="NCBI Taxonomy" id="199310"/>
    <lineage>
        <taxon>Bacteria</taxon>
        <taxon>Pseudomonadati</taxon>
        <taxon>Pseudomonadota</taxon>
        <taxon>Gammaproteobacteria</taxon>
        <taxon>Enterobacterales</taxon>
        <taxon>Enterobacteriaceae</taxon>
        <taxon>Escherichia</taxon>
    </lineage>
</organism>
<accession>P63418</accession>
<accession>P45473</accession>